<proteinExistence type="inferred from homology"/>
<feature type="chain" id="PRO_0000303616" description="tRNA N6-adenosine threonylcarbamoyltransferase">
    <location>
        <begin position="1"/>
        <end position="354"/>
    </location>
</feature>
<feature type="binding site" evidence="1">
    <location>
        <position position="115"/>
    </location>
    <ligand>
        <name>Fe cation</name>
        <dbReference type="ChEBI" id="CHEBI:24875"/>
    </ligand>
</feature>
<feature type="binding site" evidence="1">
    <location>
        <position position="119"/>
    </location>
    <ligand>
        <name>Fe cation</name>
        <dbReference type="ChEBI" id="CHEBI:24875"/>
    </ligand>
</feature>
<feature type="binding site" evidence="1">
    <location>
        <begin position="138"/>
        <end position="142"/>
    </location>
    <ligand>
        <name>substrate</name>
    </ligand>
</feature>
<feature type="binding site" evidence="1">
    <location>
        <position position="171"/>
    </location>
    <ligand>
        <name>substrate</name>
    </ligand>
</feature>
<feature type="binding site" evidence="1">
    <location>
        <position position="184"/>
    </location>
    <ligand>
        <name>substrate</name>
    </ligand>
</feature>
<feature type="binding site" evidence="1">
    <location>
        <position position="276"/>
    </location>
    <ligand>
        <name>substrate</name>
    </ligand>
</feature>
<feature type="binding site" evidence="1">
    <location>
        <position position="304"/>
    </location>
    <ligand>
        <name>Fe cation</name>
        <dbReference type="ChEBI" id="CHEBI:24875"/>
    </ligand>
</feature>
<evidence type="ECO:0000255" key="1">
    <source>
        <dbReference type="HAMAP-Rule" id="MF_01445"/>
    </source>
</evidence>
<reference key="1">
    <citation type="journal article" date="2002" name="Nature">
        <title>Comparison of the genomes of two Xanthomonas pathogens with differing host specificities.</title>
        <authorList>
            <person name="da Silva A.C.R."/>
            <person name="Ferro J.A."/>
            <person name="Reinach F.C."/>
            <person name="Farah C.S."/>
            <person name="Furlan L.R."/>
            <person name="Quaggio R.B."/>
            <person name="Monteiro-Vitorello C.B."/>
            <person name="Van Sluys M.A."/>
            <person name="Almeida N.F. Jr."/>
            <person name="Alves L.M.C."/>
            <person name="do Amaral A.M."/>
            <person name="Bertolini M.C."/>
            <person name="Camargo L.E.A."/>
            <person name="Camarotte G."/>
            <person name="Cannavan F."/>
            <person name="Cardozo J."/>
            <person name="Chambergo F."/>
            <person name="Ciapina L.P."/>
            <person name="Cicarelli R.M.B."/>
            <person name="Coutinho L.L."/>
            <person name="Cursino-Santos J.R."/>
            <person name="El-Dorry H."/>
            <person name="Faria J.B."/>
            <person name="Ferreira A.J.S."/>
            <person name="Ferreira R.C.C."/>
            <person name="Ferro M.I.T."/>
            <person name="Formighieri E.F."/>
            <person name="Franco M.C."/>
            <person name="Greggio C.C."/>
            <person name="Gruber A."/>
            <person name="Katsuyama A.M."/>
            <person name="Kishi L.T."/>
            <person name="Leite R.P."/>
            <person name="Lemos E.G.M."/>
            <person name="Lemos M.V.F."/>
            <person name="Locali E.C."/>
            <person name="Machado M.A."/>
            <person name="Madeira A.M.B.N."/>
            <person name="Martinez-Rossi N.M."/>
            <person name="Martins E.C."/>
            <person name="Meidanis J."/>
            <person name="Menck C.F.M."/>
            <person name="Miyaki C.Y."/>
            <person name="Moon D.H."/>
            <person name="Moreira L.M."/>
            <person name="Novo M.T.M."/>
            <person name="Okura V.K."/>
            <person name="Oliveira M.C."/>
            <person name="Oliveira V.R."/>
            <person name="Pereira H.A."/>
            <person name="Rossi A."/>
            <person name="Sena J.A.D."/>
            <person name="Silva C."/>
            <person name="de Souza R.F."/>
            <person name="Spinola L.A.F."/>
            <person name="Takita M.A."/>
            <person name="Tamura R.E."/>
            <person name="Teixeira E.C."/>
            <person name="Tezza R.I.D."/>
            <person name="Trindade dos Santos M."/>
            <person name="Truffi D."/>
            <person name="Tsai S.M."/>
            <person name="White F.F."/>
            <person name="Setubal J.C."/>
            <person name="Kitajima J.P."/>
        </authorList>
    </citation>
    <scope>NUCLEOTIDE SEQUENCE [LARGE SCALE GENOMIC DNA]</scope>
    <source>
        <strain>ATCC 33913 / DSM 3586 / NCPPB 528 / LMG 568 / P 25</strain>
    </source>
</reference>
<comment type="function">
    <text evidence="1">Required for the formation of a threonylcarbamoyl group on adenosine at position 37 (t(6)A37) in tRNAs that read codons beginning with adenine. Is involved in the transfer of the threonylcarbamoyl moiety of threonylcarbamoyl-AMP (TC-AMP) to the N6 group of A37, together with TsaE and TsaB. TsaD likely plays a direct catalytic role in this reaction.</text>
</comment>
<comment type="catalytic activity">
    <reaction evidence="1">
        <text>L-threonylcarbamoyladenylate + adenosine(37) in tRNA = N(6)-L-threonylcarbamoyladenosine(37) in tRNA + AMP + H(+)</text>
        <dbReference type="Rhea" id="RHEA:37059"/>
        <dbReference type="Rhea" id="RHEA-COMP:10162"/>
        <dbReference type="Rhea" id="RHEA-COMP:10163"/>
        <dbReference type="ChEBI" id="CHEBI:15378"/>
        <dbReference type="ChEBI" id="CHEBI:73682"/>
        <dbReference type="ChEBI" id="CHEBI:74411"/>
        <dbReference type="ChEBI" id="CHEBI:74418"/>
        <dbReference type="ChEBI" id="CHEBI:456215"/>
        <dbReference type="EC" id="2.3.1.234"/>
    </reaction>
</comment>
<comment type="cofactor">
    <cofactor evidence="1">
        <name>Fe(2+)</name>
        <dbReference type="ChEBI" id="CHEBI:29033"/>
    </cofactor>
    <text evidence="1">Binds 1 Fe(2+) ion per subunit.</text>
</comment>
<comment type="subcellular location">
    <subcellularLocation>
        <location evidence="1">Cytoplasm</location>
    </subcellularLocation>
</comment>
<comment type="similarity">
    <text evidence="1">Belongs to the KAE1 / TsaD family.</text>
</comment>
<dbReference type="EC" id="2.3.1.234" evidence="1"/>
<dbReference type="EMBL" id="AE008922">
    <property type="protein sequence ID" value="AAM43490.1"/>
    <property type="molecule type" value="Genomic_DNA"/>
</dbReference>
<dbReference type="RefSeq" id="NP_639161.1">
    <property type="nucleotide sequence ID" value="NC_003902.1"/>
</dbReference>
<dbReference type="RefSeq" id="WP_011038897.1">
    <property type="nucleotide sequence ID" value="NC_003902.1"/>
</dbReference>
<dbReference type="SMR" id="Q8P494"/>
<dbReference type="STRING" id="190485.XCC3816"/>
<dbReference type="EnsemblBacteria" id="AAM43490">
    <property type="protein sequence ID" value="AAM43490"/>
    <property type="gene ID" value="XCC3816"/>
</dbReference>
<dbReference type="KEGG" id="xcc:XCC3816"/>
<dbReference type="PATRIC" id="fig|190485.4.peg.4087"/>
<dbReference type="eggNOG" id="COG0533">
    <property type="taxonomic scope" value="Bacteria"/>
</dbReference>
<dbReference type="HOGENOM" id="CLU_023208_0_0_6"/>
<dbReference type="OrthoDB" id="9806197at2"/>
<dbReference type="Proteomes" id="UP000001010">
    <property type="component" value="Chromosome"/>
</dbReference>
<dbReference type="GO" id="GO:0005737">
    <property type="term" value="C:cytoplasm"/>
    <property type="evidence" value="ECO:0007669"/>
    <property type="project" value="UniProtKB-SubCell"/>
</dbReference>
<dbReference type="GO" id="GO:0005506">
    <property type="term" value="F:iron ion binding"/>
    <property type="evidence" value="ECO:0007669"/>
    <property type="project" value="UniProtKB-UniRule"/>
</dbReference>
<dbReference type="GO" id="GO:0061711">
    <property type="term" value="F:N(6)-L-threonylcarbamoyladenine synthase activity"/>
    <property type="evidence" value="ECO:0007669"/>
    <property type="project" value="UniProtKB-EC"/>
</dbReference>
<dbReference type="GO" id="GO:0002949">
    <property type="term" value="P:tRNA threonylcarbamoyladenosine modification"/>
    <property type="evidence" value="ECO:0007669"/>
    <property type="project" value="UniProtKB-UniRule"/>
</dbReference>
<dbReference type="CDD" id="cd24133">
    <property type="entry name" value="ASKHA_NBD_TsaD_bac"/>
    <property type="match status" value="1"/>
</dbReference>
<dbReference type="FunFam" id="3.30.420.40:FF:000012">
    <property type="entry name" value="tRNA N6-adenosine threonylcarbamoyltransferase"/>
    <property type="match status" value="1"/>
</dbReference>
<dbReference type="FunFam" id="3.30.420.40:FF:000031">
    <property type="entry name" value="tRNA N6-adenosine threonylcarbamoyltransferase"/>
    <property type="match status" value="1"/>
</dbReference>
<dbReference type="Gene3D" id="3.30.420.40">
    <property type="match status" value="2"/>
</dbReference>
<dbReference type="HAMAP" id="MF_01445">
    <property type="entry name" value="TsaD"/>
    <property type="match status" value="1"/>
</dbReference>
<dbReference type="InterPro" id="IPR043129">
    <property type="entry name" value="ATPase_NBD"/>
</dbReference>
<dbReference type="InterPro" id="IPR000905">
    <property type="entry name" value="Gcp-like_dom"/>
</dbReference>
<dbReference type="InterPro" id="IPR017861">
    <property type="entry name" value="KAE1/TsaD"/>
</dbReference>
<dbReference type="InterPro" id="IPR022450">
    <property type="entry name" value="TsaD"/>
</dbReference>
<dbReference type="NCBIfam" id="TIGR00329">
    <property type="entry name" value="gcp_kae1"/>
    <property type="match status" value="1"/>
</dbReference>
<dbReference type="NCBIfam" id="TIGR03723">
    <property type="entry name" value="T6A_TsaD_YgjD"/>
    <property type="match status" value="1"/>
</dbReference>
<dbReference type="PANTHER" id="PTHR11735">
    <property type="entry name" value="TRNA N6-ADENOSINE THREONYLCARBAMOYLTRANSFERASE"/>
    <property type="match status" value="1"/>
</dbReference>
<dbReference type="PANTHER" id="PTHR11735:SF6">
    <property type="entry name" value="TRNA N6-ADENOSINE THREONYLCARBAMOYLTRANSFERASE, MITOCHONDRIAL"/>
    <property type="match status" value="1"/>
</dbReference>
<dbReference type="Pfam" id="PF00814">
    <property type="entry name" value="TsaD"/>
    <property type="match status" value="1"/>
</dbReference>
<dbReference type="PRINTS" id="PR00789">
    <property type="entry name" value="OSIALOPTASE"/>
</dbReference>
<dbReference type="SUPFAM" id="SSF53067">
    <property type="entry name" value="Actin-like ATPase domain"/>
    <property type="match status" value="2"/>
</dbReference>
<name>TSAD_XANCP</name>
<protein>
    <recommendedName>
        <fullName evidence="1">tRNA N6-adenosine threonylcarbamoyltransferase</fullName>
        <ecNumber evidence="1">2.3.1.234</ecNumber>
    </recommendedName>
    <alternativeName>
        <fullName evidence="1">N6-L-threonylcarbamoyladenine synthase</fullName>
        <shortName evidence="1">t(6)A synthase</shortName>
    </alternativeName>
    <alternativeName>
        <fullName evidence="1">t(6)A37 threonylcarbamoyladenosine biosynthesis protein TsaD</fullName>
    </alternativeName>
    <alternativeName>
        <fullName evidence="1">tRNA threonylcarbamoyladenosine biosynthesis protein TsaD</fullName>
    </alternativeName>
</protein>
<gene>
    <name evidence="1" type="primary">tsaD</name>
    <name type="synonym">gcp</name>
    <name type="ordered locus">XCC3816</name>
</gene>
<keyword id="KW-0012">Acyltransferase</keyword>
<keyword id="KW-0963">Cytoplasm</keyword>
<keyword id="KW-0408">Iron</keyword>
<keyword id="KW-0479">Metal-binding</keyword>
<keyword id="KW-1185">Reference proteome</keyword>
<keyword id="KW-0808">Transferase</keyword>
<keyword id="KW-0819">tRNA processing</keyword>
<organism>
    <name type="scientific">Xanthomonas campestris pv. campestris (strain ATCC 33913 / DSM 3586 / NCPPB 528 / LMG 568 / P 25)</name>
    <dbReference type="NCBI Taxonomy" id="190485"/>
    <lineage>
        <taxon>Bacteria</taxon>
        <taxon>Pseudomonadati</taxon>
        <taxon>Pseudomonadota</taxon>
        <taxon>Gammaproteobacteria</taxon>
        <taxon>Lysobacterales</taxon>
        <taxon>Lysobacteraceae</taxon>
        <taxon>Xanthomonas</taxon>
    </lineage>
</organism>
<sequence length="354" mass="37128">MKVLGIESSCDETGVAVYDTALSGVPALRAHAVYSQIALHAEYGGVVPELASRDHVRKLLPLIRQTLDEAGLRIDELDGVAYTAGPGLVGALLVGAGVARALAWALEVPAIGVHHMEGHLLAPLMEDDPPQPPFVALLVSGGHTQLVSVKALGAYEVLGETLDDAAGEAFDKTAKMMGLPYPGGPQLAALAETGTPGRYKFARPMTDRPGLDFSFSGLKTQVLLAWRGSDQSDTTRADIARGFEDAVVETLAIKCLRALDTADCNTLVVAGGVGANKRLRARLQEAAQRRGGRVCFPRPALCTDNGAMIAFAGALRLEAGEHADAAVQVTPRWDMASLPPLAAARESGIGNRES</sequence>
<accession>Q8P494</accession>